<protein>
    <recommendedName>
        <fullName>S-(hydroxymethyl)glutathione dehydrogenase</fullName>
        <ecNumber evidence="2">1.1.1.284</ecNumber>
    </recommendedName>
    <alternativeName>
        <fullName evidence="2">Alcohol dehydrogenase</fullName>
        <ecNumber evidence="2">1.1.1.1</ecNumber>
    </alternativeName>
    <alternativeName>
        <fullName>Glutathione-dependent formaldehyde dehydrogenase</fullName>
        <shortName>FALDH</shortName>
        <shortName>FDH</shortName>
        <shortName>FLD</shortName>
        <shortName>GSH-FDH</shortName>
        <ecNumber evidence="2">1.1.1.-</ecNumber>
    </alternativeName>
</protein>
<comment type="function">
    <text evidence="2">Oxidizes long-chain alcohols and, in the presence of glutathione, is able to oxidize formaldehyde. Also acts as a S-nitroso-glutathione reductase by catalyzing the NADH-dependent reduction of S-nitrosoglutathione, thereby regulating protein S-nitrosylation.</text>
</comment>
<comment type="catalytic activity">
    <reaction evidence="2">
        <text>a primary alcohol + NAD(+) = an aldehyde + NADH + H(+)</text>
        <dbReference type="Rhea" id="RHEA:10736"/>
        <dbReference type="ChEBI" id="CHEBI:15378"/>
        <dbReference type="ChEBI" id="CHEBI:15734"/>
        <dbReference type="ChEBI" id="CHEBI:17478"/>
        <dbReference type="ChEBI" id="CHEBI:57540"/>
        <dbReference type="ChEBI" id="CHEBI:57945"/>
        <dbReference type="EC" id="1.1.1.1"/>
    </reaction>
</comment>
<comment type="catalytic activity">
    <reaction evidence="2">
        <text>a secondary alcohol + NAD(+) = a ketone + NADH + H(+)</text>
        <dbReference type="Rhea" id="RHEA:10740"/>
        <dbReference type="ChEBI" id="CHEBI:15378"/>
        <dbReference type="ChEBI" id="CHEBI:17087"/>
        <dbReference type="ChEBI" id="CHEBI:35681"/>
        <dbReference type="ChEBI" id="CHEBI:57540"/>
        <dbReference type="ChEBI" id="CHEBI:57945"/>
        <dbReference type="EC" id="1.1.1.1"/>
    </reaction>
</comment>
<comment type="catalytic activity">
    <reaction evidence="2">
        <text>S-(hydroxymethyl)glutathione + NADP(+) = S-formylglutathione + NADPH + H(+)</text>
        <dbReference type="Rhea" id="RHEA:19981"/>
        <dbReference type="ChEBI" id="CHEBI:15378"/>
        <dbReference type="ChEBI" id="CHEBI:57688"/>
        <dbReference type="ChEBI" id="CHEBI:57783"/>
        <dbReference type="ChEBI" id="CHEBI:58349"/>
        <dbReference type="ChEBI" id="CHEBI:58758"/>
        <dbReference type="EC" id="1.1.1.284"/>
    </reaction>
</comment>
<comment type="catalytic activity">
    <reaction evidence="1">
        <text>S-(hydroxymethyl)glutathione + NAD(+) = S-formylglutathione + NADH + H(+)</text>
        <dbReference type="Rhea" id="RHEA:19985"/>
        <dbReference type="ChEBI" id="CHEBI:15378"/>
        <dbReference type="ChEBI" id="CHEBI:57540"/>
        <dbReference type="ChEBI" id="CHEBI:57688"/>
        <dbReference type="ChEBI" id="CHEBI:57945"/>
        <dbReference type="ChEBI" id="CHEBI:58758"/>
        <dbReference type="EC" id="1.1.1.284"/>
    </reaction>
</comment>
<comment type="catalytic activity">
    <reaction evidence="2">
        <text>S-nitrosoglutathione + NADH + H(+) = S-(hydroxysulfenamide)glutathione + NAD(+)</text>
        <dbReference type="Rhea" id="RHEA:78371"/>
        <dbReference type="ChEBI" id="CHEBI:15378"/>
        <dbReference type="ChEBI" id="CHEBI:57540"/>
        <dbReference type="ChEBI" id="CHEBI:57945"/>
        <dbReference type="ChEBI" id="CHEBI:145544"/>
        <dbReference type="ChEBI" id="CHEBI:229723"/>
    </reaction>
</comment>
<comment type="cofactor">
    <cofactor evidence="1">
        <name>Zn(2+)</name>
        <dbReference type="ChEBI" id="CHEBI:29105"/>
    </cofactor>
    <text evidence="1">Binds 2 Zn(2+) ions per subunit.</text>
</comment>
<comment type="similarity">
    <text evidence="4">Belongs to the zinc-containing alcohol dehydrogenase family. Class-III subfamily.</text>
</comment>
<organism>
    <name type="scientific">Komagataella pastoris</name>
    <name type="common">Yeast</name>
    <name type="synonym">Pichia pastoris</name>
    <dbReference type="NCBI Taxonomy" id="4922"/>
    <lineage>
        <taxon>Eukaryota</taxon>
        <taxon>Fungi</taxon>
        <taxon>Dikarya</taxon>
        <taxon>Ascomycota</taxon>
        <taxon>Saccharomycotina</taxon>
        <taxon>Pichiomycetes</taxon>
        <taxon>Pichiales</taxon>
        <taxon>Pichiaceae</taxon>
        <taxon>Komagataella</taxon>
    </lineage>
</organism>
<dbReference type="EC" id="1.1.1.284" evidence="2"/>
<dbReference type="EC" id="1.1.1.1" evidence="2"/>
<dbReference type="EC" id="1.1.1.-" evidence="2"/>
<dbReference type="EMBL" id="AF066054">
    <property type="protein sequence ID" value="AAC35913.1"/>
    <property type="molecule type" value="Genomic_DNA"/>
</dbReference>
<dbReference type="SMR" id="O74685"/>
<dbReference type="GO" id="GO:0005829">
    <property type="term" value="C:cytosol"/>
    <property type="evidence" value="ECO:0007669"/>
    <property type="project" value="TreeGrafter"/>
</dbReference>
<dbReference type="GO" id="GO:0004022">
    <property type="term" value="F:alcohol dehydrogenase (NAD+) activity"/>
    <property type="evidence" value="ECO:0007669"/>
    <property type="project" value="RHEA"/>
</dbReference>
<dbReference type="GO" id="GO:0106322">
    <property type="term" value="F:S-(hydroxymethyl)glutathione dehydrogenase (NAD+) activity"/>
    <property type="evidence" value="ECO:0007669"/>
    <property type="project" value="RHEA"/>
</dbReference>
<dbReference type="GO" id="GO:0106321">
    <property type="term" value="F:S-(hydroxymethyl)glutathione dehydrogenase (NADP+) activity"/>
    <property type="evidence" value="ECO:0007669"/>
    <property type="project" value="RHEA"/>
</dbReference>
<dbReference type="GO" id="GO:0080007">
    <property type="term" value="F:S-nitrosoglutathione reductase (NADH) activity"/>
    <property type="evidence" value="ECO:0007669"/>
    <property type="project" value="RHEA"/>
</dbReference>
<dbReference type="GO" id="GO:0008270">
    <property type="term" value="F:zinc ion binding"/>
    <property type="evidence" value="ECO:0007669"/>
    <property type="project" value="InterPro"/>
</dbReference>
<dbReference type="GO" id="GO:0046294">
    <property type="term" value="P:formaldehyde catabolic process"/>
    <property type="evidence" value="ECO:0007669"/>
    <property type="project" value="InterPro"/>
</dbReference>
<dbReference type="CDD" id="cd08300">
    <property type="entry name" value="alcohol_DH_class_III"/>
    <property type="match status" value="1"/>
</dbReference>
<dbReference type="FunFam" id="3.40.50.720:FF:000003">
    <property type="entry name" value="S-(hydroxymethyl)glutathione dehydrogenase"/>
    <property type="match status" value="1"/>
</dbReference>
<dbReference type="FunFam" id="3.90.180.10:FF:000001">
    <property type="entry name" value="S-(hydroxymethyl)glutathione dehydrogenase"/>
    <property type="match status" value="1"/>
</dbReference>
<dbReference type="Gene3D" id="3.90.180.10">
    <property type="entry name" value="Medium-chain alcohol dehydrogenases, catalytic domain"/>
    <property type="match status" value="1"/>
</dbReference>
<dbReference type="Gene3D" id="3.40.50.720">
    <property type="entry name" value="NAD(P)-binding Rossmann-like Domain"/>
    <property type="match status" value="1"/>
</dbReference>
<dbReference type="InterPro" id="IPR013149">
    <property type="entry name" value="ADH-like_C"/>
</dbReference>
<dbReference type="InterPro" id="IPR013154">
    <property type="entry name" value="ADH-like_N"/>
</dbReference>
<dbReference type="InterPro" id="IPR014183">
    <property type="entry name" value="ADH_3"/>
</dbReference>
<dbReference type="InterPro" id="IPR002328">
    <property type="entry name" value="ADH_Zn_CS"/>
</dbReference>
<dbReference type="InterPro" id="IPR011032">
    <property type="entry name" value="GroES-like_sf"/>
</dbReference>
<dbReference type="InterPro" id="IPR036291">
    <property type="entry name" value="NAD(P)-bd_dom_sf"/>
</dbReference>
<dbReference type="NCBIfam" id="TIGR02818">
    <property type="entry name" value="adh_III_F_hyde"/>
    <property type="match status" value="1"/>
</dbReference>
<dbReference type="PANTHER" id="PTHR43880">
    <property type="entry name" value="ALCOHOL DEHYDROGENASE"/>
    <property type="match status" value="1"/>
</dbReference>
<dbReference type="PANTHER" id="PTHR43880:SF12">
    <property type="entry name" value="ALCOHOL DEHYDROGENASE CLASS-3"/>
    <property type="match status" value="1"/>
</dbReference>
<dbReference type="Pfam" id="PF08240">
    <property type="entry name" value="ADH_N"/>
    <property type="match status" value="1"/>
</dbReference>
<dbReference type="Pfam" id="PF00107">
    <property type="entry name" value="ADH_zinc_N"/>
    <property type="match status" value="1"/>
</dbReference>
<dbReference type="SUPFAM" id="SSF50129">
    <property type="entry name" value="GroES-like"/>
    <property type="match status" value="2"/>
</dbReference>
<dbReference type="SUPFAM" id="SSF51735">
    <property type="entry name" value="NAD(P)-binding Rossmann-fold domains"/>
    <property type="match status" value="1"/>
</dbReference>
<dbReference type="PROSITE" id="PS00059">
    <property type="entry name" value="ADH_ZINC"/>
    <property type="match status" value="1"/>
</dbReference>
<keyword id="KW-0479">Metal-binding</keyword>
<keyword id="KW-0520">NAD</keyword>
<keyword id="KW-0560">Oxidoreductase</keyword>
<keyword id="KW-0862">Zinc</keyword>
<feature type="chain" id="PRO_0000160782" description="S-(hydroxymethyl)glutathione dehydrogenase">
    <location>
        <begin position="1"/>
        <end position="379"/>
    </location>
</feature>
<feature type="binding site" evidence="3">
    <location>
        <position position="47"/>
    </location>
    <ligand>
        <name>Zn(2+)</name>
        <dbReference type="ChEBI" id="CHEBI:29105"/>
        <label>1</label>
        <note>catalytic</note>
    </ligand>
</feature>
<feature type="binding site" evidence="3">
    <location>
        <position position="48"/>
    </location>
    <ligand>
        <name>NAD(+)</name>
        <dbReference type="ChEBI" id="CHEBI:57540"/>
    </ligand>
</feature>
<feature type="binding site" evidence="3">
    <location>
        <position position="69"/>
    </location>
    <ligand>
        <name>Zn(2+)</name>
        <dbReference type="ChEBI" id="CHEBI:29105"/>
        <label>1</label>
        <note>catalytic</note>
    </ligand>
</feature>
<feature type="binding site" evidence="3">
    <location>
        <position position="70"/>
    </location>
    <ligand>
        <name>Zn(2+)</name>
        <dbReference type="ChEBI" id="CHEBI:29105"/>
        <label>1</label>
        <note>catalytic</note>
    </ligand>
</feature>
<feature type="binding site" evidence="3">
    <location>
        <position position="99"/>
    </location>
    <ligand>
        <name>Zn(2+)</name>
        <dbReference type="ChEBI" id="CHEBI:29105"/>
        <label>2</label>
    </ligand>
</feature>
<feature type="binding site" evidence="3">
    <location>
        <position position="102"/>
    </location>
    <ligand>
        <name>Zn(2+)</name>
        <dbReference type="ChEBI" id="CHEBI:29105"/>
        <label>2</label>
    </ligand>
</feature>
<feature type="binding site" evidence="3">
    <location>
        <position position="105"/>
    </location>
    <ligand>
        <name>Zn(2+)</name>
        <dbReference type="ChEBI" id="CHEBI:29105"/>
        <label>2</label>
    </ligand>
</feature>
<feature type="binding site" evidence="3">
    <location>
        <position position="113"/>
    </location>
    <ligand>
        <name>Zn(2+)</name>
        <dbReference type="ChEBI" id="CHEBI:29105"/>
        <label>2</label>
    </ligand>
</feature>
<feature type="binding site" evidence="3">
    <location>
        <position position="176"/>
    </location>
    <ligand>
        <name>Zn(2+)</name>
        <dbReference type="ChEBI" id="CHEBI:29105"/>
        <label>1</label>
        <note>catalytic</note>
    </ligand>
</feature>
<feature type="binding site" evidence="3">
    <location>
        <begin position="201"/>
        <end position="206"/>
    </location>
    <ligand>
        <name>NAD(+)</name>
        <dbReference type="ChEBI" id="CHEBI:57540"/>
    </ligand>
</feature>
<feature type="binding site" evidence="3">
    <location>
        <position position="225"/>
    </location>
    <ligand>
        <name>NAD(+)</name>
        <dbReference type="ChEBI" id="CHEBI:57540"/>
    </ligand>
</feature>
<feature type="binding site" evidence="3">
    <location>
        <begin position="296"/>
        <end position="298"/>
    </location>
    <ligand>
        <name>NAD(+)</name>
        <dbReference type="ChEBI" id="CHEBI:57540"/>
    </ligand>
</feature>
<sequence>MSTEGQIIKCKAAVAWEAGKDLSIEEIEVLPPRAHEVRVKVEFTGVCHTDAYTLSGADAEGSFPVVFGHEGAGVVESVGEGVESVKVGDSVVLLYTPECRECKFCLSGKTNLCGKIRATQGKGLLPDGTSRFRCKGKDLFHYMGCSSFSQYTVVADISVVKVQDEAPKDKTCLLGCGVTTGYGAAINTAKISKGDKIGVFGAGCIGLSVIQGAVSKGASEIIVIDINDSKKAWADQFGATKFVNPTTLPEGTNIVDYLIDITDGGFDYTFDCTGNVQVMRNALESCHKGWGESIIIGVAAAGKEISTRPFQLVTGRVWRGCAFGGIKGRTQMPSLVQDYLDGKIKVDEFITHRHDLDNINKAFHDMHAGNCIRAVITMH</sequence>
<evidence type="ECO:0000250" key="1">
    <source>
        <dbReference type="UniProtKB" id="P06525"/>
    </source>
</evidence>
<evidence type="ECO:0000250" key="2">
    <source>
        <dbReference type="UniProtKB" id="P32771"/>
    </source>
</evidence>
<evidence type="ECO:0000250" key="3">
    <source>
        <dbReference type="UniProtKB" id="Q96533"/>
    </source>
</evidence>
<evidence type="ECO:0000305" key="4"/>
<name>FADH_PICPA</name>
<reference key="1">
    <citation type="journal article" date="1998" name="Gene">
        <title>A strong nitrogen source-regulated promoter for controlled expression of foreign genes in the yeast Pichia pastoris.</title>
        <authorList>
            <person name="Shen S."/>
            <person name="Sulter G."/>
            <person name="Jeffries T.W."/>
            <person name="Cregg J.M."/>
        </authorList>
    </citation>
    <scope>NUCLEOTIDE SEQUENCE [GENOMIC DNA]</scope>
    <source>
        <strain>JC100</strain>
    </source>
</reference>
<accession>O74685</accession>
<gene>
    <name type="primary">FLD1</name>
</gene>
<proteinExistence type="inferred from homology"/>